<gene>
    <name type="primary">ORF26</name>
</gene>
<feature type="chain" id="PRO_0000222108" description="Uncharacterized protein ORF26">
    <location>
        <begin position="1"/>
        <end position="139"/>
    </location>
</feature>
<feature type="region of interest" description="Disordered" evidence="1">
    <location>
        <begin position="1"/>
        <end position="26"/>
    </location>
</feature>
<feature type="compositionally biased region" description="Basic and acidic residues" evidence="1">
    <location>
        <begin position="17"/>
        <end position="26"/>
    </location>
</feature>
<sequence length="139" mass="16203">MQLVREKRGAHQHVPRKTTEPQKVRGDGICPERMSLLMMINWPFVDSTVHLETVDALMRYEGVQPPPFDPVNDSSRKYIMDRWIPWFVTNCERPSNTELYTLVSKIREDAIVFGASIVTTLTHLVPQREVRNKCRLKII</sequence>
<organism>
    <name type="scientific">Ictalurid herpesvirus 1 (strain Auburn)</name>
    <name type="common">IcHV-1</name>
    <name type="synonym">Channel catfish herpesvirus</name>
    <dbReference type="NCBI Taxonomy" id="766178"/>
    <lineage>
        <taxon>Viruses</taxon>
        <taxon>Duplodnaviria</taxon>
        <taxon>Heunggongvirae</taxon>
        <taxon>Peploviricota</taxon>
        <taxon>Herviviricetes</taxon>
        <taxon>Herpesvirales</taxon>
        <taxon>Alloherpesviridae</taxon>
        <taxon>Ictavirus</taxon>
        <taxon>Ictavirus ictaluridallo1</taxon>
        <taxon>Ictalurid herpesvirus 1</taxon>
    </lineage>
</organism>
<dbReference type="EMBL" id="M75136">
    <property type="protein sequence ID" value="AAA88129.1"/>
    <property type="molecule type" value="Genomic_DNA"/>
</dbReference>
<dbReference type="PIR" id="I36788">
    <property type="entry name" value="I36788"/>
</dbReference>
<dbReference type="RefSeq" id="NP_041117.1">
    <property type="nucleotide sequence ID" value="NC_001493.2"/>
</dbReference>
<dbReference type="GeneID" id="1488427"/>
<dbReference type="KEGG" id="vg:1488427"/>
<dbReference type="Proteomes" id="UP000007643">
    <property type="component" value="Segment"/>
</dbReference>
<protein>
    <recommendedName>
        <fullName>Uncharacterized protein ORF26</fullName>
    </recommendedName>
</protein>
<keyword id="KW-1185">Reference proteome</keyword>
<name>VG26_ICHVA</name>
<evidence type="ECO:0000256" key="1">
    <source>
        <dbReference type="SAM" id="MobiDB-lite"/>
    </source>
</evidence>
<accession>Q00147</accession>
<proteinExistence type="predicted"/>
<organismHost>
    <name type="scientific">Ictaluridae</name>
    <name type="common">bullhead catfishes</name>
    <dbReference type="NCBI Taxonomy" id="7996"/>
</organismHost>
<reference key="1">
    <citation type="journal article" date="1992" name="Virology">
        <title>Channel catfish virus: a new type of herpesvirus.</title>
        <authorList>
            <person name="Davison A.J."/>
        </authorList>
    </citation>
    <scope>NUCLEOTIDE SEQUENCE [LARGE SCALE GENOMIC DNA]</scope>
</reference>